<proteinExistence type="evidence at transcript level"/>
<accession>Q9SCS3</accession>
<evidence type="ECO:0000250" key="1">
    <source>
        <dbReference type="UniProtKB" id="P62707"/>
    </source>
</evidence>
<evidence type="ECO:0000250" key="2">
    <source>
        <dbReference type="UniProtKB" id="Q9MAA2"/>
    </source>
</evidence>
<evidence type="ECO:0000305" key="3"/>
<evidence type="ECO:0000312" key="4">
    <source>
        <dbReference type="Araport" id="AT3G50520"/>
    </source>
</evidence>
<evidence type="ECO:0000312" key="5">
    <source>
        <dbReference type="EMBL" id="CAB62481.1"/>
    </source>
</evidence>
<protein>
    <recommendedName>
        <fullName evidence="3">Phosphoglycerate mutase-like protein 4</fullName>
    </recommendedName>
</protein>
<feature type="chain" id="PRO_0000430634" description="Phosphoglycerate mutase-like protein 4">
    <location>
        <begin position="1"/>
        <end position="230"/>
    </location>
</feature>
<feature type="active site" description="Tele-phosphohistidine intermediate" evidence="1">
    <location>
        <position position="21"/>
    </location>
</feature>
<feature type="active site" description="Proton donor/acceptor" evidence="1">
    <location>
        <position position="96"/>
    </location>
</feature>
<feature type="site" description="Transition state stabilizer" evidence="1">
    <location>
        <position position="165"/>
    </location>
</feature>
<gene>
    <name evidence="4" type="ordered locus">At3g50520</name>
    <name evidence="5" type="ORF">T20E23.120</name>
</gene>
<organism>
    <name type="scientific">Arabidopsis thaliana</name>
    <name type="common">Mouse-ear cress</name>
    <dbReference type="NCBI Taxonomy" id="3702"/>
    <lineage>
        <taxon>Eukaryota</taxon>
        <taxon>Viridiplantae</taxon>
        <taxon>Streptophyta</taxon>
        <taxon>Embryophyta</taxon>
        <taxon>Tracheophyta</taxon>
        <taxon>Spermatophyta</taxon>
        <taxon>Magnoliopsida</taxon>
        <taxon>eudicotyledons</taxon>
        <taxon>Gunneridae</taxon>
        <taxon>Pentapetalae</taxon>
        <taxon>rosids</taxon>
        <taxon>malvids</taxon>
        <taxon>Brassicales</taxon>
        <taxon>Brassicaceae</taxon>
        <taxon>Camelineae</taxon>
        <taxon>Arabidopsis</taxon>
    </lineage>
</organism>
<sequence>MEESRFDSEDVDYAEIVVVRHGETSWNAERKIQGHLDVELNDAGRQQAQRVAERLSKEQKISHVYSSDLKRAFETAQIIAAKCGKLEVLTDRDLRERHLGDMQGLVYQEASKIRPEAYKAFSSNRTDVDIPGGGESLDKLYDRCTTALQRIGDKHKGERIVVVTHGGVIRSLYERARPSARKVEKILNTSVNVFRLFDGDKWTIQVWGDVSHLEETGFLQSGFGGDRTSG</sequence>
<reference key="1">
    <citation type="journal article" date="2000" name="Nature">
        <title>Sequence and analysis of chromosome 3 of the plant Arabidopsis thaliana.</title>
        <authorList>
            <person name="Salanoubat M."/>
            <person name="Lemcke K."/>
            <person name="Rieger M."/>
            <person name="Ansorge W."/>
            <person name="Unseld M."/>
            <person name="Fartmann B."/>
            <person name="Valle G."/>
            <person name="Bloecker H."/>
            <person name="Perez-Alonso M."/>
            <person name="Obermaier B."/>
            <person name="Delseny M."/>
            <person name="Boutry M."/>
            <person name="Grivell L.A."/>
            <person name="Mache R."/>
            <person name="Puigdomenech P."/>
            <person name="De Simone V."/>
            <person name="Choisne N."/>
            <person name="Artiguenave F."/>
            <person name="Robert C."/>
            <person name="Brottier P."/>
            <person name="Wincker P."/>
            <person name="Cattolico L."/>
            <person name="Weissenbach J."/>
            <person name="Saurin W."/>
            <person name="Quetier F."/>
            <person name="Schaefer M."/>
            <person name="Mueller-Auer S."/>
            <person name="Gabel C."/>
            <person name="Fuchs M."/>
            <person name="Benes V."/>
            <person name="Wurmbach E."/>
            <person name="Drzonek H."/>
            <person name="Erfle H."/>
            <person name="Jordan N."/>
            <person name="Bangert S."/>
            <person name="Wiedelmann R."/>
            <person name="Kranz H."/>
            <person name="Voss H."/>
            <person name="Holland R."/>
            <person name="Brandt P."/>
            <person name="Nyakatura G."/>
            <person name="Vezzi A."/>
            <person name="D'Angelo M."/>
            <person name="Pallavicini A."/>
            <person name="Toppo S."/>
            <person name="Simionati B."/>
            <person name="Conrad A."/>
            <person name="Hornischer K."/>
            <person name="Kauer G."/>
            <person name="Loehnert T.-H."/>
            <person name="Nordsiek G."/>
            <person name="Reichelt J."/>
            <person name="Scharfe M."/>
            <person name="Schoen O."/>
            <person name="Bargues M."/>
            <person name="Terol J."/>
            <person name="Climent J."/>
            <person name="Navarro P."/>
            <person name="Collado C."/>
            <person name="Perez-Perez A."/>
            <person name="Ottenwaelder B."/>
            <person name="Duchemin D."/>
            <person name="Cooke R."/>
            <person name="Laudie M."/>
            <person name="Berger-Llauro C."/>
            <person name="Purnelle B."/>
            <person name="Masuy D."/>
            <person name="de Haan M."/>
            <person name="Maarse A.C."/>
            <person name="Alcaraz J.-P."/>
            <person name="Cottet A."/>
            <person name="Casacuberta E."/>
            <person name="Monfort A."/>
            <person name="Argiriou A."/>
            <person name="Flores M."/>
            <person name="Liguori R."/>
            <person name="Vitale D."/>
            <person name="Mannhaupt G."/>
            <person name="Haase D."/>
            <person name="Schoof H."/>
            <person name="Rudd S."/>
            <person name="Zaccaria P."/>
            <person name="Mewes H.-W."/>
            <person name="Mayer K.F.X."/>
            <person name="Kaul S."/>
            <person name="Town C.D."/>
            <person name="Koo H.L."/>
            <person name="Tallon L.J."/>
            <person name="Jenkins J."/>
            <person name="Rooney T."/>
            <person name="Rizzo M."/>
            <person name="Walts A."/>
            <person name="Utterback T."/>
            <person name="Fujii C.Y."/>
            <person name="Shea T.P."/>
            <person name="Creasy T.H."/>
            <person name="Haas B."/>
            <person name="Maiti R."/>
            <person name="Wu D."/>
            <person name="Peterson J."/>
            <person name="Van Aken S."/>
            <person name="Pai G."/>
            <person name="Militscher J."/>
            <person name="Sellers P."/>
            <person name="Gill J.E."/>
            <person name="Feldblyum T.V."/>
            <person name="Preuss D."/>
            <person name="Lin X."/>
            <person name="Nierman W.C."/>
            <person name="Salzberg S.L."/>
            <person name="White O."/>
            <person name="Venter J.C."/>
            <person name="Fraser C.M."/>
            <person name="Kaneko T."/>
            <person name="Nakamura Y."/>
            <person name="Sato S."/>
            <person name="Kato T."/>
            <person name="Asamizu E."/>
            <person name="Sasamoto S."/>
            <person name="Kimura T."/>
            <person name="Idesawa K."/>
            <person name="Kawashima K."/>
            <person name="Kishida Y."/>
            <person name="Kiyokawa C."/>
            <person name="Kohara M."/>
            <person name="Matsumoto M."/>
            <person name="Matsuno A."/>
            <person name="Muraki A."/>
            <person name="Nakayama S."/>
            <person name="Nakazaki N."/>
            <person name="Shinpo S."/>
            <person name="Takeuchi C."/>
            <person name="Wada T."/>
            <person name="Watanabe A."/>
            <person name="Yamada M."/>
            <person name="Yasuda M."/>
            <person name="Tabata S."/>
        </authorList>
    </citation>
    <scope>NUCLEOTIDE SEQUENCE [LARGE SCALE GENOMIC DNA]</scope>
    <source>
        <strain>cv. Columbia</strain>
    </source>
</reference>
<reference key="2">
    <citation type="journal article" date="2017" name="Plant J.">
        <title>Araport11: a complete reannotation of the Arabidopsis thaliana reference genome.</title>
        <authorList>
            <person name="Cheng C.Y."/>
            <person name="Krishnakumar V."/>
            <person name="Chan A.P."/>
            <person name="Thibaud-Nissen F."/>
            <person name="Schobel S."/>
            <person name="Town C.D."/>
        </authorList>
    </citation>
    <scope>GENOME REANNOTATION</scope>
    <source>
        <strain>cv. Columbia</strain>
    </source>
</reference>
<reference key="3">
    <citation type="journal article" date="2003" name="Science">
        <title>Empirical analysis of transcriptional activity in the Arabidopsis genome.</title>
        <authorList>
            <person name="Yamada K."/>
            <person name="Lim J."/>
            <person name="Dale J.M."/>
            <person name="Chen H."/>
            <person name="Shinn P."/>
            <person name="Palm C.J."/>
            <person name="Southwick A.M."/>
            <person name="Wu H.C."/>
            <person name="Kim C.J."/>
            <person name="Nguyen M."/>
            <person name="Pham P.K."/>
            <person name="Cheuk R.F."/>
            <person name="Karlin-Newmann G."/>
            <person name="Liu S.X."/>
            <person name="Lam B."/>
            <person name="Sakano H."/>
            <person name="Wu T."/>
            <person name="Yu G."/>
            <person name="Miranda M."/>
            <person name="Quach H.L."/>
            <person name="Tripp M."/>
            <person name="Chang C.H."/>
            <person name="Lee J.M."/>
            <person name="Toriumi M.J."/>
            <person name="Chan M.M."/>
            <person name="Tang C.C."/>
            <person name="Onodera C.S."/>
            <person name="Deng J.M."/>
            <person name="Akiyama K."/>
            <person name="Ansari Y."/>
            <person name="Arakawa T."/>
            <person name="Banh J."/>
            <person name="Banno F."/>
            <person name="Bowser L."/>
            <person name="Brooks S.Y."/>
            <person name="Carninci P."/>
            <person name="Chao Q."/>
            <person name="Choy N."/>
            <person name="Enju A."/>
            <person name="Goldsmith A.D."/>
            <person name="Gurjal M."/>
            <person name="Hansen N.F."/>
            <person name="Hayashizaki Y."/>
            <person name="Johnson-Hopson C."/>
            <person name="Hsuan V.W."/>
            <person name="Iida K."/>
            <person name="Karnes M."/>
            <person name="Khan S."/>
            <person name="Koesema E."/>
            <person name="Ishida J."/>
            <person name="Jiang P.X."/>
            <person name="Jones T."/>
            <person name="Kawai J."/>
            <person name="Kamiya A."/>
            <person name="Meyers C."/>
            <person name="Nakajima M."/>
            <person name="Narusaka M."/>
            <person name="Seki M."/>
            <person name="Sakurai T."/>
            <person name="Satou M."/>
            <person name="Tamse R."/>
            <person name="Vaysberg M."/>
            <person name="Wallender E.K."/>
            <person name="Wong C."/>
            <person name="Yamamura Y."/>
            <person name="Yuan S."/>
            <person name="Shinozaki K."/>
            <person name="Davis R.W."/>
            <person name="Theologis A."/>
            <person name="Ecker J.R."/>
        </authorList>
    </citation>
    <scope>NUCLEOTIDE SEQUENCE [LARGE SCALE MRNA]</scope>
    <source>
        <strain>cv. Columbia</strain>
    </source>
</reference>
<name>PGML4_ARATH</name>
<keyword id="KW-1185">Reference proteome</keyword>
<comment type="function">
    <text evidence="2">May play a role in carbohydrates metabolism.</text>
</comment>
<comment type="similarity">
    <text evidence="3">Belongs to the phosphoglycerate mutase family.</text>
</comment>
<dbReference type="EMBL" id="AL133363">
    <property type="protein sequence ID" value="CAB62481.1"/>
    <property type="molecule type" value="Genomic_DNA"/>
</dbReference>
<dbReference type="EMBL" id="CP002686">
    <property type="protein sequence ID" value="AEE78675.1"/>
    <property type="molecule type" value="Genomic_DNA"/>
</dbReference>
<dbReference type="EMBL" id="AY035101">
    <property type="protein sequence ID" value="AAK59606.1"/>
    <property type="molecule type" value="mRNA"/>
</dbReference>
<dbReference type="EMBL" id="AY063062">
    <property type="protein sequence ID" value="AAL34236.1"/>
    <property type="molecule type" value="mRNA"/>
</dbReference>
<dbReference type="PIR" id="T46083">
    <property type="entry name" value="T46083"/>
</dbReference>
<dbReference type="RefSeq" id="NP_190621.1">
    <property type="nucleotide sequence ID" value="NM_114912.5"/>
</dbReference>
<dbReference type="SMR" id="Q9SCS3"/>
<dbReference type="BioGRID" id="9534">
    <property type="interactions" value="1"/>
</dbReference>
<dbReference type="FunCoup" id="Q9SCS3">
    <property type="interactions" value="1513"/>
</dbReference>
<dbReference type="STRING" id="3702.Q9SCS3"/>
<dbReference type="PaxDb" id="3702-AT3G50520.1"/>
<dbReference type="ProteomicsDB" id="236141"/>
<dbReference type="EnsemblPlants" id="AT3G50520.1">
    <property type="protein sequence ID" value="AT3G50520.1"/>
    <property type="gene ID" value="AT3G50520"/>
</dbReference>
<dbReference type="GeneID" id="824216"/>
<dbReference type="Gramene" id="AT3G50520.1">
    <property type="protein sequence ID" value="AT3G50520.1"/>
    <property type="gene ID" value="AT3G50520"/>
</dbReference>
<dbReference type="KEGG" id="ath:AT3G50520"/>
<dbReference type="Araport" id="AT3G50520"/>
<dbReference type="TAIR" id="AT3G50520"/>
<dbReference type="eggNOG" id="KOG0235">
    <property type="taxonomic scope" value="Eukaryota"/>
</dbReference>
<dbReference type="HOGENOM" id="CLU_033323_14_0_1"/>
<dbReference type="InParanoid" id="Q9SCS3"/>
<dbReference type="OMA" id="TEWNVAR"/>
<dbReference type="OrthoDB" id="354304at2759"/>
<dbReference type="PhylomeDB" id="Q9SCS3"/>
<dbReference type="BioCyc" id="ARA:AT3G50520-MONOMER"/>
<dbReference type="PRO" id="PR:Q9SCS3"/>
<dbReference type="Proteomes" id="UP000006548">
    <property type="component" value="Chromosome 3"/>
</dbReference>
<dbReference type="ExpressionAtlas" id="Q9SCS3">
    <property type="expression patterns" value="baseline and differential"/>
</dbReference>
<dbReference type="GO" id="GO:0003824">
    <property type="term" value="F:catalytic activity"/>
    <property type="evidence" value="ECO:0007669"/>
    <property type="project" value="InterPro"/>
</dbReference>
<dbReference type="CDD" id="cd07067">
    <property type="entry name" value="HP_PGM_like"/>
    <property type="match status" value="1"/>
</dbReference>
<dbReference type="FunFam" id="3.40.50.1240:FF:000029">
    <property type="entry name" value="Phosphoglycerate mutase-like protein 4"/>
    <property type="match status" value="1"/>
</dbReference>
<dbReference type="Gene3D" id="3.40.50.1240">
    <property type="entry name" value="Phosphoglycerate mutase-like"/>
    <property type="match status" value="1"/>
</dbReference>
<dbReference type="InterPro" id="IPR013078">
    <property type="entry name" value="His_Pase_superF_clade-1"/>
</dbReference>
<dbReference type="InterPro" id="IPR029033">
    <property type="entry name" value="His_PPase_superfam"/>
</dbReference>
<dbReference type="InterPro" id="IPR001345">
    <property type="entry name" value="PG/BPGM_mutase_AS"/>
</dbReference>
<dbReference type="InterPro" id="IPR050275">
    <property type="entry name" value="PGM_Phosphatase"/>
</dbReference>
<dbReference type="PANTHER" id="PTHR48100">
    <property type="entry name" value="BROAD-SPECIFICITY PHOSPHATASE YOR283W-RELATED"/>
    <property type="match status" value="1"/>
</dbReference>
<dbReference type="PANTHER" id="PTHR48100:SF34">
    <property type="entry name" value="PHOSPHOGLYCERATE MUTASE-LIKE PROTEIN 4"/>
    <property type="match status" value="1"/>
</dbReference>
<dbReference type="Pfam" id="PF00300">
    <property type="entry name" value="His_Phos_1"/>
    <property type="match status" value="1"/>
</dbReference>
<dbReference type="SMART" id="SM00855">
    <property type="entry name" value="PGAM"/>
    <property type="match status" value="1"/>
</dbReference>
<dbReference type="SUPFAM" id="SSF53254">
    <property type="entry name" value="Phosphoglycerate mutase-like"/>
    <property type="match status" value="1"/>
</dbReference>
<dbReference type="PROSITE" id="PS00175">
    <property type="entry name" value="PG_MUTASE"/>
    <property type="match status" value="1"/>
</dbReference>